<reference key="1">
    <citation type="journal article" date="2006" name="BMC Genomics">
        <title>The complete chloroplast genome sequence of Gossypium hirsutum: organization and phylogenetic relationships to other angiosperms.</title>
        <authorList>
            <person name="Lee S.-B."/>
            <person name="Kaittanis C."/>
            <person name="Jansen R.K."/>
            <person name="Hostetler J.B."/>
            <person name="Tallon L.J."/>
            <person name="Town C.D."/>
            <person name="Daniell H."/>
        </authorList>
    </citation>
    <scope>NUCLEOTIDE SEQUENCE [LARGE SCALE GENOMIC DNA]</scope>
    <source>
        <strain>cv. Coker 310FR</strain>
    </source>
</reference>
<feature type="chain" id="PRO_0000359826" description="Photosystem II CP47 reaction center protein">
    <location>
        <begin position="1"/>
        <end position="508"/>
    </location>
</feature>
<feature type="transmembrane region" description="Helical" evidence="1">
    <location>
        <begin position="21"/>
        <end position="36"/>
    </location>
</feature>
<feature type="transmembrane region" description="Helical" evidence="1">
    <location>
        <begin position="101"/>
        <end position="115"/>
    </location>
</feature>
<feature type="transmembrane region" description="Helical" evidence="1">
    <location>
        <begin position="140"/>
        <end position="156"/>
    </location>
</feature>
<feature type="transmembrane region" description="Helical" evidence="1">
    <location>
        <begin position="203"/>
        <end position="218"/>
    </location>
</feature>
<feature type="transmembrane region" description="Helical" evidence="1">
    <location>
        <begin position="237"/>
        <end position="252"/>
    </location>
</feature>
<feature type="transmembrane region" description="Helical" evidence="1">
    <location>
        <begin position="457"/>
        <end position="472"/>
    </location>
</feature>
<sequence>MGLPWYRVHTVVLNDPGRLLSVHIMHTALVAGWAGSMALYELAVFDPSDPVLDPMWRQGMFVIPFMTRLGITNSWGGWSITGGTITNPGIWSYEGVAGAHIVFSGLCFLAAIWHWVYWDLEIFCDERTGKPSLDLPKIFGIHLFLSGVACFGFGAFHVTGLYGPGIWVSDPYGLTGKVQPVNPAWGVEGFDPFVPGGIASHHIAAGTLGILAGLFHLSVRPPQRLYKGLRMGNIETVLSSSIAAVFFAAFVVAGTMWYGSATTPIELFGPTRYQWDQGYFQQEIYRRVSAGLAENQSLSEAWSKIPEKLAFYDYIGNNPAKGGLFRAGSMDNGDGIAVGWLGHPIFRDKDGRELFVRRMPTFFETFPVVLVDGDGIVRADVPFRRAESKYSVEQVGVTVEFYGGELNGVSYSDPATVKKYARRAQLGEIFELDRATLKSDGVFRSSPRGWFTFGHASFALLFFFGHIWHGARTLFRDVFAGIDPDLDAQVEFGAFQKLGDPTTRRQVV</sequence>
<evidence type="ECO:0000255" key="1">
    <source>
        <dbReference type="HAMAP-Rule" id="MF_01495"/>
    </source>
</evidence>
<keyword id="KW-0148">Chlorophyll</keyword>
<keyword id="KW-0150">Chloroplast</keyword>
<keyword id="KW-0157">Chromophore</keyword>
<keyword id="KW-0472">Membrane</keyword>
<keyword id="KW-0602">Photosynthesis</keyword>
<keyword id="KW-0604">Photosystem II</keyword>
<keyword id="KW-0934">Plastid</keyword>
<keyword id="KW-1185">Reference proteome</keyword>
<keyword id="KW-0793">Thylakoid</keyword>
<keyword id="KW-0812">Transmembrane</keyword>
<keyword id="KW-1133">Transmembrane helix</keyword>
<name>PSBB_GOSHI</name>
<dbReference type="EMBL" id="DQ345959">
    <property type="protein sequence ID" value="ABC73653.1"/>
    <property type="molecule type" value="Genomic_DNA"/>
</dbReference>
<dbReference type="RefSeq" id="YP_538962.1">
    <property type="nucleotide sequence ID" value="NC_007944.1"/>
</dbReference>
<dbReference type="SMR" id="Q2L932"/>
<dbReference type="GeneID" id="3989130"/>
<dbReference type="KEGG" id="ghi:3989130"/>
<dbReference type="OMA" id="MLAAIWH"/>
<dbReference type="OrthoDB" id="10291at41938"/>
<dbReference type="Proteomes" id="UP000189702">
    <property type="component" value="Chloroplast Pltd"/>
</dbReference>
<dbReference type="GO" id="GO:0009535">
    <property type="term" value="C:chloroplast thylakoid membrane"/>
    <property type="evidence" value="ECO:0007669"/>
    <property type="project" value="UniProtKB-SubCell"/>
</dbReference>
<dbReference type="GO" id="GO:0009523">
    <property type="term" value="C:photosystem II"/>
    <property type="evidence" value="ECO:0007669"/>
    <property type="project" value="UniProtKB-KW"/>
</dbReference>
<dbReference type="GO" id="GO:0016168">
    <property type="term" value="F:chlorophyll binding"/>
    <property type="evidence" value="ECO:0007669"/>
    <property type="project" value="UniProtKB-UniRule"/>
</dbReference>
<dbReference type="GO" id="GO:0045156">
    <property type="term" value="F:electron transporter, transferring electrons within the cyclic electron transport pathway of photosynthesis activity"/>
    <property type="evidence" value="ECO:0007669"/>
    <property type="project" value="InterPro"/>
</dbReference>
<dbReference type="GO" id="GO:0009772">
    <property type="term" value="P:photosynthetic electron transport in photosystem II"/>
    <property type="evidence" value="ECO:0007669"/>
    <property type="project" value="InterPro"/>
</dbReference>
<dbReference type="FunFam" id="3.10.680.10:FF:000001">
    <property type="entry name" value="Photosystem II CP47 reaction center protein"/>
    <property type="match status" value="1"/>
</dbReference>
<dbReference type="Gene3D" id="3.10.680.10">
    <property type="entry name" value="Photosystem II CP47 reaction center protein"/>
    <property type="match status" value="1"/>
</dbReference>
<dbReference type="HAMAP" id="MF_01495">
    <property type="entry name" value="PSII_PsbB_CP47"/>
    <property type="match status" value="1"/>
</dbReference>
<dbReference type="InterPro" id="IPR000932">
    <property type="entry name" value="PS_antenna-like"/>
</dbReference>
<dbReference type="InterPro" id="IPR036001">
    <property type="entry name" value="PS_II_antenna-like_sf"/>
</dbReference>
<dbReference type="InterPro" id="IPR017486">
    <property type="entry name" value="PSII_PsbB"/>
</dbReference>
<dbReference type="NCBIfam" id="TIGR03039">
    <property type="entry name" value="PS_II_CP47"/>
    <property type="match status" value="1"/>
</dbReference>
<dbReference type="PANTHER" id="PTHR33180">
    <property type="entry name" value="PHOTOSYSTEM II CP43 REACTION CENTER PROTEIN"/>
    <property type="match status" value="1"/>
</dbReference>
<dbReference type="PANTHER" id="PTHR33180:SF35">
    <property type="entry name" value="PHOTOSYSTEM II CP47 REACTION CENTER PROTEIN"/>
    <property type="match status" value="1"/>
</dbReference>
<dbReference type="Pfam" id="PF00421">
    <property type="entry name" value="PSII"/>
    <property type="match status" value="1"/>
</dbReference>
<dbReference type="SUPFAM" id="SSF161077">
    <property type="entry name" value="Photosystem II antenna protein-like"/>
    <property type="match status" value="1"/>
</dbReference>
<organism>
    <name type="scientific">Gossypium hirsutum</name>
    <name type="common">Upland cotton</name>
    <name type="synonym">Gossypium mexicanum</name>
    <dbReference type="NCBI Taxonomy" id="3635"/>
    <lineage>
        <taxon>Eukaryota</taxon>
        <taxon>Viridiplantae</taxon>
        <taxon>Streptophyta</taxon>
        <taxon>Embryophyta</taxon>
        <taxon>Tracheophyta</taxon>
        <taxon>Spermatophyta</taxon>
        <taxon>Magnoliopsida</taxon>
        <taxon>eudicotyledons</taxon>
        <taxon>Gunneridae</taxon>
        <taxon>Pentapetalae</taxon>
        <taxon>rosids</taxon>
        <taxon>malvids</taxon>
        <taxon>Malvales</taxon>
        <taxon>Malvaceae</taxon>
        <taxon>Malvoideae</taxon>
        <taxon>Gossypium</taxon>
    </lineage>
</organism>
<geneLocation type="chloroplast"/>
<comment type="function">
    <text evidence="1">One of the components of the core complex of photosystem II (PSII). It binds chlorophyll and helps catalyze the primary light-induced photochemical processes of PSII. PSII is a light-driven water:plastoquinone oxidoreductase, using light energy to abstract electrons from H(2)O, generating O(2) and a proton gradient subsequently used for ATP formation.</text>
</comment>
<comment type="cofactor">
    <text evidence="1">Binds multiple chlorophylls. PSII binds additional chlorophylls, carotenoids and specific lipids.</text>
</comment>
<comment type="subunit">
    <text evidence="1">PSII is composed of 1 copy each of membrane proteins PsbA, PsbB, PsbC, PsbD, PsbE, PsbF, PsbH, PsbI, PsbJ, PsbK, PsbL, PsbM, PsbT, PsbX, PsbY, PsbZ, Psb30/Ycf12, at least 3 peripheral proteins of the oxygen-evolving complex and a large number of cofactors. It forms dimeric complexes.</text>
</comment>
<comment type="subcellular location">
    <subcellularLocation>
        <location evidence="1">Plastid</location>
        <location evidence="1">Chloroplast thylakoid membrane</location>
        <topology evidence="1">Multi-pass membrane protein</topology>
    </subcellularLocation>
</comment>
<comment type="similarity">
    <text evidence="1">Belongs to the PsbB/PsbC family. PsbB subfamily.</text>
</comment>
<proteinExistence type="inferred from homology"/>
<accession>Q2L932</accession>
<protein>
    <recommendedName>
        <fullName evidence="1">Photosystem II CP47 reaction center protein</fullName>
    </recommendedName>
    <alternativeName>
        <fullName evidence="1">PSII 47 kDa protein</fullName>
    </alternativeName>
    <alternativeName>
        <fullName evidence="1">Protein CP-47</fullName>
    </alternativeName>
</protein>
<gene>
    <name evidence="1" type="primary">psbB</name>
</gene>